<organism>
    <name type="scientific">Salmonella choleraesuis (strain SC-B67)</name>
    <dbReference type="NCBI Taxonomy" id="321314"/>
    <lineage>
        <taxon>Bacteria</taxon>
        <taxon>Pseudomonadati</taxon>
        <taxon>Pseudomonadota</taxon>
        <taxon>Gammaproteobacteria</taxon>
        <taxon>Enterobacterales</taxon>
        <taxon>Enterobacteriaceae</taxon>
        <taxon>Salmonella</taxon>
    </lineage>
</organism>
<protein>
    <recommendedName>
        <fullName evidence="1">N-acetylneuraminate epimerase</fullName>
        <ecNumber evidence="1">5.1.3.24</ecNumber>
    </recommendedName>
    <alternativeName>
        <fullName evidence="1">N-acetylneuraminate mutarotase</fullName>
        <shortName evidence="1">Neu5Ac mutarotase</shortName>
    </alternativeName>
    <alternativeName>
        <fullName evidence="1">Sialic acid epimerase</fullName>
    </alternativeName>
</protein>
<accession>Q57QM5</accession>
<feature type="signal peptide" evidence="1">
    <location>
        <begin position="1"/>
        <end position="29"/>
    </location>
</feature>
<feature type="chain" id="PRO_0000333065" description="N-acetylneuraminate epimerase">
    <location>
        <begin position="30"/>
        <end position="386"/>
    </location>
</feature>
<feature type="repeat" description="Kelch 1">
    <location>
        <begin position="51"/>
        <end position="95"/>
    </location>
</feature>
<feature type="repeat" description="Kelch 2">
    <location>
        <begin position="97"/>
        <end position="149"/>
    </location>
</feature>
<feature type="repeat" description="Kelch 3">
    <location>
        <begin position="151"/>
        <end position="186"/>
    </location>
</feature>
<feature type="repeat" description="Kelch 4">
    <location>
        <begin position="187"/>
        <end position="232"/>
    </location>
</feature>
<feature type="repeat" description="Kelch 5">
    <location>
        <begin position="235"/>
        <end position="284"/>
    </location>
</feature>
<feature type="repeat" description="Kelch 6">
    <location>
        <begin position="306"/>
        <end position="355"/>
    </location>
</feature>
<feature type="repeat" description="Kelch 7">
    <location>
        <begin position="357"/>
        <end position="386"/>
    </location>
</feature>
<feature type="active site" description="Proton acceptor" evidence="1">
    <location>
        <position position="241"/>
    </location>
</feature>
<keyword id="KW-0119">Carbohydrate metabolism</keyword>
<keyword id="KW-0413">Isomerase</keyword>
<keyword id="KW-0880">Kelch repeat</keyword>
<keyword id="KW-0574">Periplasm</keyword>
<keyword id="KW-0677">Repeat</keyword>
<keyword id="KW-0732">Signal</keyword>
<dbReference type="EC" id="5.1.3.24" evidence="1"/>
<dbReference type="EMBL" id="AE017220">
    <property type="protein sequence ID" value="AAX64986.1"/>
    <property type="molecule type" value="Genomic_DNA"/>
</dbReference>
<dbReference type="RefSeq" id="WP_000525756.1">
    <property type="nucleotide sequence ID" value="NC_006905.1"/>
</dbReference>
<dbReference type="SMR" id="Q57QM5"/>
<dbReference type="KEGG" id="sec:SCH_1080"/>
<dbReference type="HOGENOM" id="CLU_061535_0_0_6"/>
<dbReference type="Proteomes" id="UP000000538">
    <property type="component" value="Chromosome"/>
</dbReference>
<dbReference type="GO" id="GO:0042597">
    <property type="term" value="C:periplasmic space"/>
    <property type="evidence" value="ECO:0007669"/>
    <property type="project" value="UniProtKB-SubCell"/>
</dbReference>
<dbReference type="GO" id="GO:0016857">
    <property type="term" value="F:racemase and epimerase activity, acting on carbohydrates and derivatives"/>
    <property type="evidence" value="ECO:0007669"/>
    <property type="project" value="UniProtKB-UniRule"/>
</dbReference>
<dbReference type="Gene3D" id="2.120.10.80">
    <property type="entry name" value="Kelch-type beta propeller"/>
    <property type="match status" value="2"/>
</dbReference>
<dbReference type="HAMAP" id="MF_01195">
    <property type="entry name" value="NanM"/>
    <property type="match status" value="1"/>
</dbReference>
<dbReference type="InterPro" id="IPR015915">
    <property type="entry name" value="Kelch-typ_b-propeller"/>
</dbReference>
<dbReference type="InterPro" id="IPR056734">
    <property type="entry name" value="NANM"/>
</dbReference>
<dbReference type="InterPro" id="IPR019936">
    <property type="entry name" value="NanM_proteobact"/>
</dbReference>
<dbReference type="NCBIfam" id="TIGR03547">
    <property type="entry name" value="muta_rot_YjhT"/>
    <property type="match status" value="1"/>
</dbReference>
<dbReference type="NCBIfam" id="NF010730">
    <property type="entry name" value="PRK14131.1"/>
    <property type="match status" value="1"/>
</dbReference>
<dbReference type="PANTHER" id="PTHR46093">
    <property type="entry name" value="ACYL-COA-BINDING DOMAIN-CONTAINING PROTEIN 5"/>
    <property type="match status" value="1"/>
</dbReference>
<dbReference type="PANTHER" id="PTHR46093:SF18">
    <property type="entry name" value="FIBRONECTIN TYPE-III DOMAIN-CONTAINING PROTEIN"/>
    <property type="match status" value="1"/>
</dbReference>
<dbReference type="Pfam" id="PF24996">
    <property type="entry name" value="NANM"/>
    <property type="match status" value="1"/>
</dbReference>
<dbReference type="SUPFAM" id="SSF117281">
    <property type="entry name" value="Kelch motif"/>
    <property type="match status" value="1"/>
</dbReference>
<comment type="function">
    <text evidence="1">Converts alpha-N-acetylneuranimic acid (Neu5Ac) to the beta-anomer, accelerating the equilibrium between the alpha- and beta-anomers. Probably facilitates sialidase-negative bacteria to compete successfully for limited amounts of extracellular Neu5Ac, which is likely taken up in the beta-anomer. In addition, the rapid removal of sialic acid from solution might be advantageous to the bacterium to damp down host responses.</text>
</comment>
<comment type="catalytic activity">
    <reaction evidence="1">
        <text>N-acetyl-alpha-neuraminate = N-acetyl-beta-neuraminate</text>
        <dbReference type="Rhea" id="RHEA:25233"/>
        <dbReference type="ChEBI" id="CHEBI:58705"/>
        <dbReference type="ChEBI" id="CHEBI:58770"/>
        <dbReference type="EC" id="5.1.3.24"/>
    </reaction>
</comment>
<comment type="subunit">
    <text evidence="1">Homodimer.</text>
</comment>
<comment type="subcellular location">
    <subcellularLocation>
        <location evidence="1">Periplasm</location>
    </subcellularLocation>
</comment>
<comment type="similarity">
    <text evidence="1">Belongs to the NanM family.</text>
</comment>
<sequence length="386" mass="42573">MGMQMKNFKKMMTLMALCLSVAITTSGYATTLPDIPEPLKNGTGAIDNNGVIYVGLGTAGTSWYKIDLKKQHKDWERIKSFPGGAREQSVSVFLNDELYVFGGVGKKNSESPLQVYSDVYKYSPVKNTWQKVDTISPVGLTGHTGVKLNETMVLITGGVNEHIFDKYFIDIAAAAADESEKNKVIYNYFNKPAKDYFFNKIVFIYNAKENTWKNAGELPDAGTAGSSSVMENNFLMLINGELKPGLRTDVIYRAMWDNDKLTWLKNSQLPPSPGEQQQEGLAGAFSGYSHGVLLVGGGANFPGAKQNYTNGKFYSHEGINKKWRDEVYGLVNGHWQYMGKMKQPLGYGVSVSYGDEVFLIGGENAKGKPVSSVTSFTMRDGNLLIK</sequence>
<proteinExistence type="inferred from homology"/>
<gene>
    <name evidence="1" type="primary">nanM</name>
    <name type="ordered locus">SCH_1080</name>
</gene>
<name>NANM_SALCH</name>
<reference key="1">
    <citation type="journal article" date="2005" name="Nucleic Acids Res.">
        <title>The genome sequence of Salmonella enterica serovar Choleraesuis, a highly invasive and resistant zoonotic pathogen.</title>
        <authorList>
            <person name="Chiu C.-H."/>
            <person name="Tang P."/>
            <person name="Chu C."/>
            <person name="Hu S."/>
            <person name="Bao Q."/>
            <person name="Yu J."/>
            <person name="Chou Y.-Y."/>
            <person name="Wang H.-S."/>
            <person name="Lee Y.-S."/>
        </authorList>
    </citation>
    <scope>NUCLEOTIDE SEQUENCE [LARGE SCALE GENOMIC DNA]</scope>
    <source>
        <strain>SC-B67</strain>
    </source>
</reference>
<evidence type="ECO:0000255" key="1">
    <source>
        <dbReference type="HAMAP-Rule" id="MF_01195"/>
    </source>
</evidence>